<accession>P82785</accession>
<organism evidence="6">
    <name type="scientific">Arabidopsis thaliana</name>
    <name type="common">Mouse-ear cress</name>
    <dbReference type="NCBI Taxonomy" id="3702"/>
    <lineage>
        <taxon>Eukaryota</taxon>
        <taxon>Viridiplantae</taxon>
        <taxon>Streptophyta</taxon>
        <taxon>Embryophyta</taxon>
        <taxon>Tracheophyta</taxon>
        <taxon>Spermatophyta</taxon>
        <taxon>Magnoliopsida</taxon>
        <taxon>eudicotyledons</taxon>
        <taxon>Gunneridae</taxon>
        <taxon>Pentapetalae</taxon>
        <taxon>rosids</taxon>
        <taxon>malvids</taxon>
        <taxon>Brassicales</taxon>
        <taxon>Brassicaceae</taxon>
        <taxon>Camelineae</taxon>
        <taxon>Arabidopsis</taxon>
    </lineage>
</organism>
<sequence>MKSSMQLISTLFFLVILVVAPGMKMVVEGQPQLCETKSLNYRGLCLKWRSCKRVCISEGFPDGRCKGFFNNKCVCRKPCALLSTEN</sequence>
<feature type="signal peptide" evidence="4">
    <location>
        <begin position="1"/>
        <end position="29"/>
    </location>
</feature>
<feature type="chain" id="PRO_0000007030" description="Putative defensin-like protein 9">
    <location>
        <begin position="30"/>
        <end position="86"/>
    </location>
</feature>
<feature type="modified residue" description="Pyrrolidone carboxylic acid" evidence="3">
    <location>
        <position position="30"/>
    </location>
</feature>
<feature type="disulfide bond" evidence="2">
    <location>
        <begin position="34"/>
        <end position="79"/>
    </location>
</feature>
<feature type="disulfide bond" evidence="2">
    <location>
        <begin position="45"/>
        <end position="65"/>
    </location>
</feature>
<feature type="disulfide bond" evidence="2">
    <location>
        <begin position="51"/>
        <end position="73"/>
    </location>
</feature>
<feature type="disulfide bond" evidence="2">
    <location>
        <begin position="55"/>
        <end position="75"/>
    </location>
</feature>
<evidence type="ECO:0000250" key="1"/>
<evidence type="ECO:0000250" key="2">
    <source>
        <dbReference type="UniProtKB" id="P20158"/>
    </source>
</evidence>
<evidence type="ECO:0000250" key="3">
    <source>
        <dbReference type="UniProtKB" id="P30224"/>
    </source>
</evidence>
<evidence type="ECO:0000255" key="4"/>
<evidence type="ECO:0000269" key="5">
    <source>
    </source>
</evidence>
<evidence type="ECO:0000305" key="6"/>
<proteinExistence type="inferred from homology"/>
<gene>
    <name type="primary">LCR76</name>
    <name type="ordered locus">At2g31953</name>
    <name type="ORF">F22D22</name>
</gene>
<dbReference type="EMBL" id="AC006223">
    <property type="status" value="NOT_ANNOTATED_CDS"/>
    <property type="molecule type" value="Genomic_DNA"/>
</dbReference>
<dbReference type="EMBL" id="CP002685">
    <property type="protein sequence ID" value="AEC08607.1"/>
    <property type="molecule type" value="Genomic_DNA"/>
</dbReference>
<dbReference type="RefSeq" id="NP_001031460.1">
    <property type="nucleotide sequence ID" value="NM_001036383.2"/>
</dbReference>
<dbReference type="SMR" id="P82785"/>
<dbReference type="PaxDb" id="3702-AT2G31953.1"/>
<dbReference type="ProteomicsDB" id="224172"/>
<dbReference type="EnsemblPlants" id="AT2G31953.1">
    <property type="protein sequence ID" value="AT2G31953.1"/>
    <property type="gene ID" value="AT2G31953"/>
</dbReference>
<dbReference type="GeneID" id="3767941"/>
<dbReference type="Gramene" id="AT2G31953.1">
    <property type="protein sequence ID" value="AT2G31953.1"/>
    <property type="gene ID" value="AT2G31953"/>
</dbReference>
<dbReference type="KEGG" id="ath:AT2G31953"/>
<dbReference type="Araport" id="AT2G31953"/>
<dbReference type="TAIR" id="AT2G31953">
    <property type="gene designation" value="LCR76"/>
</dbReference>
<dbReference type="HOGENOM" id="CLU_161668_1_2_1"/>
<dbReference type="InParanoid" id="P82785"/>
<dbReference type="OMA" id="FRHRCIC"/>
<dbReference type="OrthoDB" id="997377at2759"/>
<dbReference type="PhylomeDB" id="P82785"/>
<dbReference type="PRO" id="PR:P82785"/>
<dbReference type="Proteomes" id="UP000006548">
    <property type="component" value="Chromosome 2"/>
</dbReference>
<dbReference type="ExpressionAtlas" id="P82785">
    <property type="expression patterns" value="baseline and differential"/>
</dbReference>
<dbReference type="GO" id="GO:0005576">
    <property type="term" value="C:extracellular region"/>
    <property type="evidence" value="ECO:0007669"/>
    <property type="project" value="UniProtKB-SubCell"/>
</dbReference>
<dbReference type="GO" id="GO:0050832">
    <property type="term" value="P:defense response to fungus"/>
    <property type="evidence" value="ECO:0007669"/>
    <property type="project" value="UniProtKB-KW"/>
</dbReference>
<dbReference type="GO" id="GO:0031640">
    <property type="term" value="P:killing of cells of another organism"/>
    <property type="evidence" value="ECO:0007669"/>
    <property type="project" value="UniProtKB-KW"/>
</dbReference>
<dbReference type="CDD" id="cd00107">
    <property type="entry name" value="Knot1"/>
    <property type="match status" value="1"/>
</dbReference>
<dbReference type="Gene3D" id="3.30.30.10">
    <property type="entry name" value="Knottin, scorpion toxin-like"/>
    <property type="match status" value="1"/>
</dbReference>
<dbReference type="InterPro" id="IPR008176">
    <property type="entry name" value="Defensin_plant"/>
</dbReference>
<dbReference type="InterPro" id="IPR003614">
    <property type="entry name" value="Scorpion_toxin-like"/>
</dbReference>
<dbReference type="InterPro" id="IPR036574">
    <property type="entry name" value="Scorpion_toxin-like_sf"/>
</dbReference>
<dbReference type="PANTHER" id="PTHR33147">
    <property type="entry name" value="DEFENSIN-LIKE PROTEIN 1"/>
    <property type="match status" value="1"/>
</dbReference>
<dbReference type="PANTHER" id="PTHR33147:SF26">
    <property type="entry name" value="DEFENSIN-LIKE PROTEIN 7-RELATED"/>
    <property type="match status" value="1"/>
</dbReference>
<dbReference type="Pfam" id="PF00304">
    <property type="entry name" value="Gamma-thionin"/>
    <property type="match status" value="1"/>
</dbReference>
<dbReference type="SMART" id="SM00505">
    <property type="entry name" value="Knot1"/>
    <property type="match status" value="1"/>
</dbReference>
<dbReference type="SUPFAM" id="SSF57095">
    <property type="entry name" value="Scorpion toxin-like"/>
    <property type="match status" value="1"/>
</dbReference>
<dbReference type="PROSITE" id="PS00940">
    <property type="entry name" value="GAMMA_THIONIN"/>
    <property type="match status" value="1"/>
</dbReference>
<name>DEF09_ARATH</name>
<reference evidence="6" key="1">
    <citation type="journal article" date="1999" name="Nature">
        <title>Sequence and analysis of chromosome 2 of the plant Arabidopsis thaliana.</title>
        <authorList>
            <person name="Lin X."/>
            <person name="Kaul S."/>
            <person name="Rounsley S.D."/>
            <person name="Shea T.P."/>
            <person name="Benito M.-I."/>
            <person name="Town C.D."/>
            <person name="Fujii C.Y."/>
            <person name="Mason T.M."/>
            <person name="Bowman C.L."/>
            <person name="Barnstead M.E."/>
            <person name="Feldblyum T.V."/>
            <person name="Buell C.R."/>
            <person name="Ketchum K.A."/>
            <person name="Lee J.J."/>
            <person name="Ronning C.M."/>
            <person name="Koo H.L."/>
            <person name="Moffat K.S."/>
            <person name="Cronin L.A."/>
            <person name="Shen M."/>
            <person name="Pai G."/>
            <person name="Van Aken S."/>
            <person name="Umayam L."/>
            <person name="Tallon L.J."/>
            <person name="Gill J.E."/>
            <person name="Adams M.D."/>
            <person name="Carrera A.J."/>
            <person name="Creasy T.H."/>
            <person name="Goodman H.M."/>
            <person name="Somerville C.R."/>
            <person name="Copenhaver G.P."/>
            <person name="Preuss D."/>
            <person name="Nierman W.C."/>
            <person name="White O."/>
            <person name="Eisen J.A."/>
            <person name="Salzberg S.L."/>
            <person name="Fraser C.M."/>
            <person name="Venter J.C."/>
        </authorList>
    </citation>
    <scope>NUCLEOTIDE SEQUENCE [LARGE SCALE GENOMIC DNA]</scope>
    <source>
        <strain evidence="5">cv. Columbia</strain>
    </source>
</reference>
<reference key="2">
    <citation type="journal article" date="2017" name="Plant J.">
        <title>Araport11: a complete reannotation of the Arabidopsis thaliana reference genome.</title>
        <authorList>
            <person name="Cheng C.Y."/>
            <person name="Krishnakumar V."/>
            <person name="Chan A.P."/>
            <person name="Thibaud-Nissen F."/>
            <person name="Schobel S."/>
            <person name="Town C.D."/>
        </authorList>
    </citation>
    <scope>GENOME REANNOTATION</scope>
    <source>
        <strain>cv. Columbia</strain>
    </source>
</reference>
<reference evidence="6" key="3">
    <citation type="journal article" date="2001" name="Plant Mol. Biol.">
        <title>Two large Arabidopsis thaliana gene families are homologous to the Brassica gene superfamily that encodes pollen coat proteins and the male component of the self-incompatibility response.</title>
        <authorList>
            <person name="Vanoosthuyse V."/>
            <person name="Miege C."/>
            <person name="Dumas C."/>
            <person name="Cock J.M."/>
        </authorList>
    </citation>
    <scope>IDENTIFICATION</scope>
</reference>
<reference key="4">
    <citation type="journal article" date="2005" name="Plant Physiol.">
        <title>Genome organization of more than 300 defensin-like genes in Arabidopsis.</title>
        <authorList>
            <person name="Silverstein K.A.T."/>
            <person name="Graham M.A."/>
            <person name="Paape T.D."/>
            <person name="VandenBosch K.A."/>
        </authorList>
    </citation>
    <scope>GENE FAMILY</scope>
</reference>
<comment type="subcellular location">
    <subcellularLocation>
        <location evidence="1">Secreted</location>
    </subcellularLocation>
</comment>
<comment type="similarity">
    <text evidence="6">Belongs to the DEFL family.</text>
</comment>
<keyword id="KW-0929">Antimicrobial</keyword>
<keyword id="KW-1015">Disulfide bond</keyword>
<keyword id="KW-0295">Fungicide</keyword>
<keyword id="KW-0611">Plant defense</keyword>
<keyword id="KW-0873">Pyrrolidone carboxylic acid</keyword>
<keyword id="KW-1185">Reference proteome</keyword>
<keyword id="KW-0964">Secreted</keyword>
<keyword id="KW-0732">Signal</keyword>
<protein>
    <recommendedName>
        <fullName>Putative defensin-like protein 9</fullName>
    </recommendedName>
    <alternativeName>
        <fullName>Putative low-molecular-weight cysteine-rich protein 76</fullName>
        <shortName>Protein LCR76</shortName>
    </alternativeName>
</protein>